<dbReference type="EC" id="5.4.99.62" evidence="1"/>
<dbReference type="EMBL" id="CP001649">
    <property type="protein sequence ID" value="ACS80609.1"/>
    <property type="molecule type" value="Genomic_DNA"/>
</dbReference>
<dbReference type="RefSeq" id="WP_015852425.1">
    <property type="nucleotide sequence ID" value="NC_012881.1"/>
</dbReference>
<dbReference type="SMR" id="C6BY79"/>
<dbReference type="STRING" id="526222.Desal_2553"/>
<dbReference type="KEGG" id="dsa:Desal_2553"/>
<dbReference type="eggNOG" id="COG1869">
    <property type="taxonomic scope" value="Bacteria"/>
</dbReference>
<dbReference type="HOGENOM" id="CLU_135498_0_0_7"/>
<dbReference type="OrthoDB" id="9805009at2"/>
<dbReference type="UniPathway" id="UPA00916">
    <property type="reaction ID" value="UER00888"/>
</dbReference>
<dbReference type="Proteomes" id="UP000002601">
    <property type="component" value="Chromosome"/>
</dbReference>
<dbReference type="GO" id="GO:0005829">
    <property type="term" value="C:cytosol"/>
    <property type="evidence" value="ECO:0007669"/>
    <property type="project" value="TreeGrafter"/>
</dbReference>
<dbReference type="GO" id="GO:0062193">
    <property type="term" value="F:D-ribose pyranase activity"/>
    <property type="evidence" value="ECO:0007669"/>
    <property type="project" value="UniProtKB-EC"/>
</dbReference>
<dbReference type="GO" id="GO:0016872">
    <property type="term" value="F:intramolecular lyase activity"/>
    <property type="evidence" value="ECO:0007669"/>
    <property type="project" value="UniProtKB-UniRule"/>
</dbReference>
<dbReference type="GO" id="GO:0048029">
    <property type="term" value="F:monosaccharide binding"/>
    <property type="evidence" value="ECO:0007669"/>
    <property type="project" value="InterPro"/>
</dbReference>
<dbReference type="GO" id="GO:0019303">
    <property type="term" value="P:D-ribose catabolic process"/>
    <property type="evidence" value="ECO:0007669"/>
    <property type="project" value="UniProtKB-UniRule"/>
</dbReference>
<dbReference type="Gene3D" id="3.40.1650.10">
    <property type="entry name" value="RbsD-like domain"/>
    <property type="match status" value="1"/>
</dbReference>
<dbReference type="HAMAP" id="MF_01661">
    <property type="entry name" value="D_rib_pyranase"/>
    <property type="match status" value="1"/>
</dbReference>
<dbReference type="InterPro" id="IPR023064">
    <property type="entry name" value="D-ribose_pyranase"/>
</dbReference>
<dbReference type="InterPro" id="IPR023750">
    <property type="entry name" value="RbsD-like_sf"/>
</dbReference>
<dbReference type="InterPro" id="IPR007721">
    <property type="entry name" value="RbsD_FucU"/>
</dbReference>
<dbReference type="NCBIfam" id="NF008761">
    <property type="entry name" value="PRK11797.1"/>
    <property type="match status" value="1"/>
</dbReference>
<dbReference type="PANTHER" id="PTHR37831">
    <property type="entry name" value="D-RIBOSE PYRANASE"/>
    <property type="match status" value="1"/>
</dbReference>
<dbReference type="PANTHER" id="PTHR37831:SF1">
    <property type="entry name" value="D-RIBOSE PYRANASE"/>
    <property type="match status" value="1"/>
</dbReference>
<dbReference type="Pfam" id="PF05025">
    <property type="entry name" value="RbsD_FucU"/>
    <property type="match status" value="1"/>
</dbReference>
<dbReference type="SUPFAM" id="SSF102546">
    <property type="entry name" value="RbsD-like"/>
    <property type="match status" value="1"/>
</dbReference>
<sequence length="139" mass="15430">MKRTGLLNSELSYIISKLGHFDALTVCDAGLPIPEGVQRIDLAVSEGIPSFIDVVKAVLMEMELESVELAEEFKDVSSDRHDELISVLEMESAQRGKDIPVDYVRHVNFKLNTKKSVAIVRTGEFTPYANITFKAGVVF</sequence>
<proteinExistence type="inferred from homology"/>
<name>RBSD_MARSD</name>
<organism>
    <name type="scientific">Maridesulfovibrio salexigens (strain ATCC 14822 / DSM 2638 / NCIMB 8403 / VKM B-1763)</name>
    <name type="common">Desulfovibrio salexigens</name>
    <dbReference type="NCBI Taxonomy" id="526222"/>
    <lineage>
        <taxon>Bacteria</taxon>
        <taxon>Pseudomonadati</taxon>
        <taxon>Thermodesulfobacteriota</taxon>
        <taxon>Desulfovibrionia</taxon>
        <taxon>Desulfovibrionales</taxon>
        <taxon>Desulfovibrionaceae</taxon>
        <taxon>Maridesulfovibrio</taxon>
    </lineage>
</organism>
<reference key="1">
    <citation type="submission" date="2009-06" db="EMBL/GenBank/DDBJ databases">
        <title>Complete sequence of Desulfovibrio salexigens DSM 2638.</title>
        <authorList>
            <consortium name="US DOE Joint Genome Institute"/>
            <person name="Lucas S."/>
            <person name="Copeland A."/>
            <person name="Lapidus A."/>
            <person name="Glavina del Rio T."/>
            <person name="Tice H."/>
            <person name="Bruce D."/>
            <person name="Goodwin L."/>
            <person name="Pitluck S."/>
            <person name="Munk A.C."/>
            <person name="Brettin T."/>
            <person name="Detter J.C."/>
            <person name="Han C."/>
            <person name="Tapia R."/>
            <person name="Larimer F."/>
            <person name="Land M."/>
            <person name="Hauser L."/>
            <person name="Kyrpides N."/>
            <person name="Anderson I."/>
            <person name="Wall J.D."/>
            <person name="Arkin A.P."/>
            <person name="Dehal P."/>
            <person name="Chivian D."/>
            <person name="Giles B."/>
            <person name="Hazen T.C."/>
        </authorList>
    </citation>
    <scope>NUCLEOTIDE SEQUENCE [LARGE SCALE GENOMIC DNA]</scope>
    <source>
        <strain>ATCC 14822 / DSM 2638 / NCIMB 8403 / VKM B-1763</strain>
    </source>
</reference>
<comment type="function">
    <text evidence="1">Catalyzes the interconversion of beta-pyran and beta-furan forms of D-ribose.</text>
</comment>
<comment type="catalytic activity">
    <reaction evidence="1">
        <text>beta-D-ribopyranose = beta-D-ribofuranose</text>
        <dbReference type="Rhea" id="RHEA:25432"/>
        <dbReference type="ChEBI" id="CHEBI:27476"/>
        <dbReference type="ChEBI" id="CHEBI:47002"/>
        <dbReference type="EC" id="5.4.99.62"/>
    </reaction>
</comment>
<comment type="pathway">
    <text evidence="1">Carbohydrate metabolism; D-ribose degradation; D-ribose 5-phosphate from beta-D-ribopyranose: step 1/2.</text>
</comment>
<comment type="subunit">
    <text evidence="1">Homodecamer.</text>
</comment>
<comment type="subcellular location">
    <subcellularLocation>
        <location evidence="1">Cytoplasm</location>
    </subcellularLocation>
</comment>
<comment type="similarity">
    <text evidence="1">Belongs to the RbsD / FucU family. RbsD subfamily.</text>
</comment>
<gene>
    <name evidence="1" type="primary">rbsD</name>
    <name type="ordered locus">Desal_2553</name>
</gene>
<accession>C6BY79</accession>
<protein>
    <recommendedName>
        <fullName evidence="1">D-ribose pyranase</fullName>
        <ecNumber evidence="1">5.4.99.62</ecNumber>
    </recommendedName>
</protein>
<feature type="chain" id="PRO_1000215863" description="D-ribose pyranase">
    <location>
        <begin position="1"/>
        <end position="139"/>
    </location>
</feature>
<feature type="active site" description="Proton donor" evidence="1">
    <location>
        <position position="20"/>
    </location>
</feature>
<feature type="binding site" evidence="1">
    <location>
        <position position="28"/>
    </location>
    <ligand>
        <name>substrate</name>
    </ligand>
</feature>
<feature type="binding site" evidence="1">
    <location>
        <position position="106"/>
    </location>
    <ligand>
        <name>substrate</name>
    </ligand>
</feature>
<feature type="binding site" evidence="1">
    <location>
        <begin position="128"/>
        <end position="130"/>
    </location>
    <ligand>
        <name>substrate</name>
    </ligand>
</feature>
<keyword id="KW-0119">Carbohydrate metabolism</keyword>
<keyword id="KW-0963">Cytoplasm</keyword>
<keyword id="KW-0413">Isomerase</keyword>
<keyword id="KW-1185">Reference proteome</keyword>
<evidence type="ECO:0000255" key="1">
    <source>
        <dbReference type="HAMAP-Rule" id="MF_01661"/>
    </source>
</evidence>